<comment type="similarity">
    <text evidence="1">Belongs to the UPF0223 family.</text>
</comment>
<organism>
    <name type="scientific">Streptococcus agalactiae serotype III (strain NEM316)</name>
    <dbReference type="NCBI Taxonomy" id="211110"/>
    <lineage>
        <taxon>Bacteria</taxon>
        <taxon>Bacillati</taxon>
        <taxon>Bacillota</taxon>
        <taxon>Bacilli</taxon>
        <taxon>Lactobacillales</taxon>
        <taxon>Streptococcaceae</taxon>
        <taxon>Streptococcus</taxon>
    </lineage>
</organism>
<feature type="chain" id="PRO_0000216693" description="UPF0223 protein gbs1030">
    <location>
        <begin position="1"/>
        <end position="93"/>
    </location>
</feature>
<proteinExistence type="inferred from homology"/>
<dbReference type="EMBL" id="AL766848">
    <property type="protein sequence ID" value="CAD46689.1"/>
    <property type="molecule type" value="Genomic_DNA"/>
</dbReference>
<dbReference type="RefSeq" id="WP_000625906.1">
    <property type="nucleotide sequence ID" value="NC_004368.1"/>
</dbReference>
<dbReference type="SMR" id="Q8E5J9"/>
<dbReference type="KEGG" id="san:gbs1030"/>
<dbReference type="eggNOG" id="COG4476">
    <property type="taxonomic scope" value="Bacteria"/>
</dbReference>
<dbReference type="HOGENOM" id="CLU_166693_1_0_9"/>
<dbReference type="Proteomes" id="UP000000823">
    <property type="component" value="Chromosome"/>
</dbReference>
<dbReference type="Gene3D" id="1.10.220.80">
    <property type="entry name" value="BH2638-like"/>
    <property type="match status" value="1"/>
</dbReference>
<dbReference type="HAMAP" id="MF_01041">
    <property type="entry name" value="UPF0223"/>
    <property type="match status" value="1"/>
</dbReference>
<dbReference type="InterPro" id="IPR023324">
    <property type="entry name" value="BH2638-like_sf"/>
</dbReference>
<dbReference type="InterPro" id="IPR007920">
    <property type="entry name" value="UPF0223"/>
</dbReference>
<dbReference type="NCBIfam" id="NF003353">
    <property type="entry name" value="PRK04387.1"/>
    <property type="match status" value="1"/>
</dbReference>
<dbReference type="Pfam" id="PF05256">
    <property type="entry name" value="UPF0223"/>
    <property type="match status" value="1"/>
</dbReference>
<dbReference type="PIRSF" id="PIRSF037260">
    <property type="entry name" value="UPF0223"/>
    <property type="match status" value="1"/>
</dbReference>
<dbReference type="SUPFAM" id="SSF158504">
    <property type="entry name" value="BH2638-like"/>
    <property type="match status" value="1"/>
</dbReference>
<evidence type="ECO:0000255" key="1">
    <source>
        <dbReference type="HAMAP-Rule" id="MF_01041"/>
    </source>
</evidence>
<protein>
    <recommendedName>
        <fullName evidence="1">UPF0223 protein gbs1030</fullName>
    </recommendedName>
</protein>
<gene>
    <name type="ordered locus">gbs1030</name>
</gene>
<name>Y1030_STRA3</name>
<reference key="1">
    <citation type="journal article" date="2002" name="Mol. Microbiol.">
        <title>Genome sequence of Streptococcus agalactiae, a pathogen causing invasive neonatal disease.</title>
        <authorList>
            <person name="Glaser P."/>
            <person name="Rusniok C."/>
            <person name="Buchrieser C."/>
            <person name="Chevalier F."/>
            <person name="Frangeul L."/>
            <person name="Msadek T."/>
            <person name="Zouine M."/>
            <person name="Couve E."/>
            <person name="Lalioui L."/>
            <person name="Poyart C."/>
            <person name="Trieu-Cuot P."/>
            <person name="Kunst F."/>
        </authorList>
    </citation>
    <scope>NUCLEOTIDE SEQUENCE [LARGE SCALE GENOMIC DNA]</scope>
    <source>
        <strain>NEM316</strain>
    </source>
</reference>
<accession>Q8E5J9</accession>
<sequence>MISSNYSYPLDPSWNTEDITKVLRFLNQVEHAYENSVKVDDLLDSYKEFKKVVKSKAQEKQIDREFQRTSGYSTYQAVKAAQQQAKGFISLGR</sequence>